<proteinExistence type="inferred from homology"/>
<keyword id="KW-0150">Chloroplast</keyword>
<keyword id="KW-0378">Hydrolase</keyword>
<keyword id="KW-0934">Plastid</keyword>
<keyword id="KW-0645">Protease</keyword>
<keyword id="KW-0720">Serine protease</keyword>
<geneLocation type="chloroplast"/>
<protein>
    <recommendedName>
        <fullName evidence="1">ATP-dependent Clp protease proteolytic subunit</fullName>
        <ecNumber evidence="1">3.4.21.92</ecNumber>
    </recommendedName>
    <alternativeName>
        <fullName evidence="1">Endopeptidase Clp</fullName>
    </alternativeName>
</protein>
<gene>
    <name evidence="1" type="primary">clpP-A</name>
</gene>
<gene>
    <name evidence="1" type="primary">clpP-B</name>
</gene>
<reference key="1">
    <citation type="journal article" date="2006" name="Mol. Biol. Evol.">
        <title>The complete chloroplast genome sequence of Pelargonium x hortorum: organization and evolution of the largest and most highly rearranged chloroplast genome of land plants.</title>
        <authorList>
            <person name="Chumley T.W."/>
            <person name="Palmer J.D."/>
            <person name="Mower J.P."/>
            <person name="Fourcade H.M."/>
            <person name="Calie P.J."/>
            <person name="Boore J.L."/>
            <person name="Jansen R.K."/>
        </authorList>
    </citation>
    <scope>NUCLEOTIDE SEQUENCE [LARGE SCALE GENOMIC DNA]</scope>
    <source>
        <strain>cv. Ringo White</strain>
    </source>
</reference>
<name>CLPP_PELHO</name>
<comment type="function">
    <text evidence="1">Cleaves peptides in various proteins in a process that requires ATP hydrolysis. Has a chymotrypsin-like activity. Plays a major role in the degradation of misfolded proteins.</text>
</comment>
<comment type="catalytic activity">
    <reaction evidence="1">
        <text>Hydrolysis of proteins to small peptides in the presence of ATP and magnesium. alpha-casein is the usual test substrate. In the absence of ATP, only oligopeptides shorter than five residues are hydrolyzed (such as succinyl-Leu-Tyr-|-NHMec, and Leu-Tyr-Leu-|-Tyr-Trp, in which cleavage of the -Tyr-|-Leu- and -Tyr-|-Trp bonds also occurs).</text>
        <dbReference type="EC" id="3.4.21.92"/>
    </reaction>
</comment>
<comment type="subunit">
    <text>Component of the chloroplastic Clp protease core complex.</text>
</comment>
<comment type="subcellular location">
    <subcellularLocation>
        <location evidence="1">Plastid</location>
        <location evidence="1">Chloroplast stroma</location>
    </subcellularLocation>
</comment>
<comment type="similarity">
    <text evidence="1">Belongs to the peptidase S14 family.</text>
</comment>
<accession>Q06FP3</accession>
<dbReference type="EC" id="3.4.21.92" evidence="1"/>
<dbReference type="EMBL" id="DQ897681">
    <property type="protein sequence ID" value="ABI17310.1"/>
    <property type="molecule type" value="Genomic_DNA"/>
</dbReference>
<dbReference type="EMBL" id="DQ897681">
    <property type="protein sequence ID" value="ABI17330.1"/>
    <property type="molecule type" value="Genomic_DNA"/>
</dbReference>
<dbReference type="SMR" id="Q06FP3"/>
<dbReference type="MEROPS" id="S14.002"/>
<dbReference type="GO" id="GO:0009570">
    <property type="term" value="C:chloroplast stroma"/>
    <property type="evidence" value="ECO:0007669"/>
    <property type="project" value="UniProtKB-SubCell"/>
</dbReference>
<dbReference type="GO" id="GO:0009368">
    <property type="term" value="C:endopeptidase Clp complex"/>
    <property type="evidence" value="ECO:0007669"/>
    <property type="project" value="TreeGrafter"/>
</dbReference>
<dbReference type="GO" id="GO:0004176">
    <property type="term" value="F:ATP-dependent peptidase activity"/>
    <property type="evidence" value="ECO:0007669"/>
    <property type="project" value="InterPro"/>
</dbReference>
<dbReference type="GO" id="GO:0051117">
    <property type="term" value="F:ATPase binding"/>
    <property type="evidence" value="ECO:0007669"/>
    <property type="project" value="TreeGrafter"/>
</dbReference>
<dbReference type="GO" id="GO:0004252">
    <property type="term" value="F:serine-type endopeptidase activity"/>
    <property type="evidence" value="ECO:0007669"/>
    <property type="project" value="UniProtKB-UniRule"/>
</dbReference>
<dbReference type="GO" id="GO:0006515">
    <property type="term" value="P:protein quality control for misfolded or incompletely synthesized proteins"/>
    <property type="evidence" value="ECO:0007669"/>
    <property type="project" value="TreeGrafter"/>
</dbReference>
<dbReference type="CDD" id="cd07017">
    <property type="entry name" value="S14_ClpP_2"/>
    <property type="match status" value="1"/>
</dbReference>
<dbReference type="Gene3D" id="3.90.226.10">
    <property type="entry name" value="2-enoyl-CoA Hydratase, Chain A, domain 1"/>
    <property type="match status" value="1"/>
</dbReference>
<dbReference type="HAMAP" id="MF_00444">
    <property type="entry name" value="ClpP"/>
    <property type="match status" value="1"/>
</dbReference>
<dbReference type="InterPro" id="IPR001907">
    <property type="entry name" value="ClpP"/>
</dbReference>
<dbReference type="InterPro" id="IPR029045">
    <property type="entry name" value="ClpP/crotonase-like_dom_sf"/>
</dbReference>
<dbReference type="InterPro" id="IPR023562">
    <property type="entry name" value="ClpP/TepA"/>
</dbReference>
<dbReference type="InterPro" id="IPR033135">
    <property type="entry name" value="ClpP_His_AS"/>
</dbReference>
<dbReference type="InterPro" id="IPR018215">
    <property type="entry name" value="ClpP_Ser_AS"/>
</dbReference>
<dbReference type="PANTHER" id="PTHR10381">
    <property type="entry name" value="ATP-DEPENDENT CLP PROTEASE PROTEOLYTIC SUBUNIT"/>
    <property type="match status" value="1"/>
</dbReference>
<dbReference type="PANTHER" id="PTHR10381:SF15">
    <property type="entry name" value="CHLOROPLASTIC ATP-DEPENDENT CLP PROTEASE PROTEOLYTIC SUBUNIT 1"/>
    <property type="match status" value="1"/>
</dbReference>
<dbReference type="Pfam" id="PF00574">
    <property type="entry name" value="CLP_protease"/>
    <property type="match status" value="1"/>
</dbReference>
<dbReference type="PRINTS" id="PR00127">
    <property type="entry name" value="CLPPROTEASEP"/>
</dbReference>
<dbReference type="SUPFAM" id="SSF52096">
    <property type="entry name" value="ClpP/crotonase"/>
    <property type="match status" value="1"/>
</dbReference>
<dbReference type="PROSITE" id="PS00382">
    <property type="entry name" value="CLP_PROTEASE_HIS"/>
    <property type="match status" value="1"/>
</dbReference>
<dbReference type="PROSITE" id="PS00381">
    <property type="entry name" value="CLP_PROTEASE_SER"/>
    <property type="match status" value="1"/>
</dbReference>
<organism>
    <name type="scientific">Pelargonium hortorum</name>
    <name type="common">Common geranium</name>
    <name type="synonym">Pelargonium inquinans x Pelargonium zonale</name>
    <dbReference type="NCBI Taxonomy" id="4031"/>
    <lineage>
        <taxon>Eukaryota</taxon>
        <taxon>Viridiplantae</taxon>
        <taxon>Streptophyta</taxon>
        <taxon>Embryophyta</taxon>
        <taxon>Tracheophyta</taxon>
        <taxon>Spermatophyta</taxon>
        <taxon>Magnoliopsida</taxon>
        <taxon>eudicotyledons</taxon>
        <taxon>Gunneridae</taxon>
        <taxon>Pentapetalae</taxon>
        <taxon>rosids</taxon>
        <taxon>malvids</taxon>
        <taxon>Geraniales</taxon>
        <taxon>Geraniaceae</taxon>
        <taxon>Pelargonium</taxon>
    </lineage>
</organism>
<sequence length="219" mass="24988">MPVGVPKVPFLNPNPDPEPDSVEEELDSMEEKATWVDLYNRLYRQRWLFLGKDLEEEVANNIVGLMIHLNIEDPFWTQTLYINCLGGLIIPGLALYDTIGFVEPDVKTICLGIAASMASVVLVGGTVTERCAFPNARVMIHQPRAKEFDDRFSDLNLEGHLFLQLRNCVTQIYIHRTNKPAWVIIADLERDTFMSATEARTYGIIDGVYAFEEEYEEWS</sequence>
<evidence type="ECO:0000255" key="1">
    <source>
        <dbReference type="HAMAP-Rule" id="MF_00444"/>
    </source>
</evidence>
<evidence type="ECO:0000256" key="2">
    <source>
        <dbReference type="SAM" id="MobiDB-lite"/>
    </source>
</evidence>
<feature type="chain" id="PRO_0000275296" description="ATP-dependent Clp protease proteolytic subunit">
    <location>
        <begin position="1"/>
        <end position="219"/>
    </location>
</feature>
<feature type="region of interest" description="Disordered" evidence="2">
    <location>
        <begin position="1"/>
        <end position="22"/>
    </location>
</feature>
<feature type="active site" description="Nucleophile" evidence="1">
    <location>
        <position position="116"/>
    </location>
</feature>
<feature type="active site" evidence="1">
    <location>
        <position position="141"/>
    </location>
</feature>